<accession>Q9D3H2</accession>
<accession>P97336</accession>
<evidence type="ECO:0000250" key="1">
    <source>
        <dbReference type="UniProtKB" id="P08937"/>
    </source>
</evidence>
<evidence type="ECO:0000269" key="2">
    <source>
    </source>
</evidence>
<evidence type="ECO:0000269" key="3">
    <source>
    </source>
</evidence>
<evidence type="ECO:0000303" key="4">
    <source>
    </source>
</evidence>
<evidence type="ECO:0000305" key="5"/>
<evidence type="ECO:0000305" key="6">
    <source>
    </source>
</evidence>
<evidence type="ECO:0000312" key="7">
    <source>
        <dbReference type="EMBL" id="AAI25515.1"/>
    </source>
</evidence>
<evidence type="ECO:0000312" key="8">
    <source>
        <dbReference type="EMBL" id="BAB30751.2"/>
    </source>
</evidence>
<evidence type="ECO:0000312" key="9">
    <source>
        <dbReference type="EMBL" id="CAA71867.1"/>
    </source>
</evidence>
<evidence type="ECO:0000312" key="10">
    <source>
        <dbReference type="EMBL" id="EDL29193.1"/>
    </source>
</evidence>
<evidence type="ECO:0000312" key="11">
    <source>
        <dbReference type="Proteomes" id="UP000000589"/>
    </source>
</evidence>
<keyword id="KW-0903">Direct protein sequencing</keyword>
<keyword id="KW-1015">Disulfide bond</keyword>
<keyword id="KW-0552">Olfaction</keyword>
<keyword id="KW-1185">Reference proteome</keyword>
<keyword id="KW-0964">Secreted</keyword>
<keyword id="KW-0716">Sensory transduction</keyword>
<keyword id="KW-0732">Signal</keyword>
<keyword id="KW-0813">Transport</keyword>
<reference evidence="8" key="1">
    <citation type="journal article" date="2005" name="Science">
        <title>The transcriptional landscape of the mammalian genome.</title>
        <authorList>
            <person name="Carninci P."/>
            <person name="Kasukawa T."/>
            <person name="Katayama S."/>
            <person name="Gough J."/>
            <person name="Frith M.C."/>
            <person name="Maeda N."/>
            <person name="Oyama R."/>
            <person name="Ravasi T."/>
            <person name="Lenhard B."/>
            <person name="Wells C."/>
            <person name="Kodzius R."/>
            <person name="Shimokawa K."/>
            <person name="Bajic V.B."/>
            <person name="Brenner S.E."/>
            <person name="Batalov S."/>
            <person name="Forrest A.R."/>
            <person name="Zavolan M."/>
            <person name="Davis M.J."/>
            <person name="Wilming L.G."/>
            <person name="Aidinis V."/>
            <person name="Allen J.E."/>
            <person name="Ambesi-Impiombato A."/>
            <person name="Apweiler R."/>
            <person name="Aturaliya R.N."/>
            <person name="Bailey T.L."/>
            <person name="Bansal M."/>
            <person name="Baxter L."/>
            <person name="Beisel K.W."/>
            <person name="Bersano T."/>
            <person name="Bono H."/>
            <person name="Chalk A.M."/>
            <person name="Chiu K.P."/>
            <person name="Choudhary V."/>
            <person name="Christoffels A."/>
            <person name="Clutterbuck D.R."/>
            <person name="Crowe M.L."/>
            <person name="Dalla E."/>
            <person name="Dalrymple B.P."/>
            <person name="de Bono B."/>
            <person name="Della Gatta G."/>
            <person name="di Bernardo D."/>
            <person name="Down T."/>
            <person name="Engstrom P."/>
            <person name="Fagiolini M."/>
            <person name="Faulkner G."/>
            <person name="Fletcher C.F."/>
            <person name="Fukushima T."/>
            <person name="Furuno M."/>
            <person name="Futaki S."/>
            <person name="Gariboldi M."/>
            <person name="Georgii-Hemming P."/>
            <person name="Gingeras T.R."/>
            <person name="Gojobori T."/>
            <person name="Green R.E."/>
            <person name="Gustincich S."/>
            <person name="Harbers M."/>
            <person name="Hayashi Y."/>
            <person name="Hensch T.K."/>
            <person name="Hirokawa N."/>
            <person name="Hill D."/>
            <person name="Huminiecki L."/>
            <person name="Iacono M."/>
            <person name="Ikeo K."/>
            <person name="Iwama A."/>
            <person name="Ishikawa T."/>
            <person name="Jakt M."/>
            <person name="Kanapin A."/>
            <person name="Katoh M."/>
            <person name="Kawasawa Y."/>
            <person name="Kelso J."/>
            <person name="Kitamura H."/>
            <person name="Kitano H."/>
            <person name="Kollias G."/>
            <person name="Krishnan S.P."/>
            <person name="Kruger A."/>
            <person name="Kummerfeld S.K."/>
            <person name="Kurochkin I.V."/>
            <person name="Lareau L.F."/>
            <person name="Lazarevic D."/>
            <person name="Lipovich L."/>
            <person name="Liu J."/>
            <person name="Liuni S."/>
            <person name="McWilliam S."/>
            <person name="Madan Babu M."/>
            <person name="Madera M."/>
            <person name="Marchionni L."/>
            <person name="Matsuda H."/>
            <person name="Matsuzawa S."/>
            <person name="Miki H."/>
            <person name="Mignone F."/>
            <person name="Miyake S."/>
            <person name="Morris K."/>
            <person name="Mottagui-Tabar S."/>
            <person name="Mulder N."/>
            <person name="Nakano N."/>
            <person name="Nakauchi H."/>
            <person name="Ng P."/>
            <person name="Nilsson R."/>
            <person name="Nishiguchi S."/>
            <person name="Nishikawa S."/>
            <person name="Nori F."/>
            <person name="Ohara O."/>
            <person name="Okazaki Y."/>
            <person name="Orlando V."/>
            <person name="Pang K.C."/>
            <person name="Pavan W.J."/>
            <person name="Pavesi G."/>
            <person name="Pesole G."/>
            <person name="Petrovsky N."/>
            <person name="Piazza S."/>
            <person name="Reed J."/>
            <person name="Reid J.F."/>
            <person name="Ring B.Z."/>
            <person name="Ringwald M."/>
            <person name="Rost B."/>
            <person name="Ruan Y."/>
            <person name="Salzberg S.L."/>
            <person name="Sandelin A."/>
            <person name="Schneider C."/>
            <person name="Schoenbach C."/>
            <person name="Sekiguchi K."/>
            <person name="Semple C.A."/>
            <person name="Seno S."/>
            <person name="Sessa L."/>
            <person name="Sheng Y."/>
            <person name="Shibata Y."/>
            <person name="Shimada H."/>
            <person name="Shimada K."/>
            <person name="Silva D."/>
            <person name="Sinclair B."/>
            <person name="Sperling S."/>
            <person name="Stupka E."/>
            <person name="Sugiura K."/>
            <person name="Sultana R."/>
            <person name="Takenaka Y."/>
            <person name="Taki K."/>
            <person name="Tammoja K."/>
            <person name="Tan S.L."/>
            <person name="Tang S."/>
            <person name="Taylor M.S."/>
            <person name="Tegner J."/>
            <person name="Teichmann S.A."/>
            <person name="Ueda H.R."/>
            <person name="van Nimwegen E."/>
            <person name="Verardo R."/>
            <person name="Wei C.L."/>
            <person name="Yagi K."/>
            <person name="Yamanishi H."/>
            <person name="Zabarovsky E."/>
            <person name="Zhu S."/>
            <person name="Zimmer A."/>
            <person name="Hide W."/>
            <person name="Bult C."/>
            <person name="Grimmond S.M."/>
            <person name="Teasdale R.D."/>
            <person name="Liu E.T."/>
            <person name="Brusic V."/>
            <person name="Quackenbush J."/>
            <person name="Wahlestedt C."/>
            <person name="Mattick J.S."/>
            <person name="Hume D.A."/>
            <person name="Kai C."/>
            <person name="Sasaki D."/>
            <person name="Tomaru Y."/>
            <person name="Fukuda S."/>
            <person name="Kanamori-Katayama M."/>
            <person name="Suzuki M."/>
            <person name="Aoki J."/>
            <person name="Arakawa T."/>
            <person name="Iida J."/>
            <person name="Imamura K."/>
            <person name="Itoh M."/>
            <person name="Kato T."/>
            <person name="Kawaji H."/>
            <person name="Kawagashira N."/>
            <person name="Kawashima T."/>
            <person name="Kojima M."/>
            <person name="Kondo S."/>
            <person name="Konno H."/>
            <person name="Nakano K."/>
            <person name="Ninomiya N."/>
            <person name="Nishio T."/>
            <person name="Okada M."/>
            <person name="Plessy C."/>
            <person name="Shibata K."/>
            <person name="Shiraki T."/>
            <person name="Suzuki S."/>
            <person name="Tagami M."/>
            <person name="Waki K."/>
            <person name="Watahiki A."/>
            <person name="Okamura-Oho Y."/>
            <person name="Suzuki H."/>
            <person name="Kawai J."/>
            <person name="Hayashizaki Y."/>
        </authorList>
    </citation>
    <scope>NUCLEOTIDE SEQUENCE [LARGE SCALE MRNA]</scope>
    <source>
        <strain evidence="8">C57BL/6J</strain>
    </source>
</reference>
<reference evidence="11" key="2">
    <citation type="journal article" date="2009" name="PLoS Biol.">
        <title>Lineage-specific biology revealed by a finished genome assembly of the mouse.</title>
        <authorList>
            <person name="Church D.M."/>
            <person name="Goodstadt L."/>
            <person name="Hillier L.W."/>
            <person name="Zody M.C."/>
            <person name="Goldstein S."/>
            <person name="She X."/>
            <person name="Bult C.J."/>
            <person name="Agarwala R."/>
            <person name="Cherry J.L."/>
            <person name="DiCuccio M."/>
            <person name="Hlavina W."/>
            <person name="Kapustin Y."/>
            <person name="Meric P."/>
            <person name="Maglott D."/>
            <person name="Birtle Z."/>
            <person name="Marques A.C."/>
            <person name="Graves T."/>
            <person name="Zhou S."/>
            <person name="Teague B."/>
            <person name="Potamousis K."/>
            <person name="Churas C."/>
            <person name="Place M."/>
            <person name="Herschleb J."/>
            <person name="Runnheim R."/>
            <person name="Forrest D."/>
            <person name="Amos-Landgraf J."/>
            <person name="Schwartz D.C."/>
            <person name="Cheng Z."/>
            <person name="Lindblad-Toh K."/>
            <person name="Eichler E.E."/>
            <person name="Ponting C.P."/>
        </authorList>
    </citation>
    <scope>NUCLEOTIDE SEQUENCE [LARGE SCALE GENOMIC DNA]</scope>
    <source>
        <strain evidence="11">C57BL/6J</strain>
    </source>
</reference>
<reference evidence="10" key="3">
    <citation type="submission" date="2005-07" db="EMBL/GenBank/DDBJ databases">
        <authorList>
            <person name="Mural R.J."/>
            <person name="Adams M.D."/>
            <person name="Myers E.W."/>
            <person name="Smith H.O."/>
            <person name="Venter J.C."/>
        </authorList>
    </citation>
    <scope>NUCLEOTIDE SEQUENCE [LARGE SCALE GENOMIC DNA]</scope>
</reference>
<reference evidence="7" key="4">
    <citation type="journal article" date="2004" name="Genome Res.">
        <title>The status, quality, and expansion of the NIH full-length cDNA project: the Mammalian Gene Collection (MGC).</title>
        <authorList>
            <consortium name="The MGC Project Team"/>
        </authorList>
    </citation>
    <scope>NUCLEOTIDE SEQUENCE [LARGE SCALE MRNA]</scope>
    <source>
        <tissue evidence="7">Brain</tissue>
    </source>
</reference>
<reference evidence="9" key="5">
    <citation type="journal article" date="1998" name="Gene">
        <title>Cloning and expression of odorant-binding proteins Ia and Ib from mouse nasal tissue.</title>
        <authorList>
            <person name="Pes D."/>
            <person name="Mameli M."/>
            <person name="Andreini I."/>
            <person name="Krieger J."/>
            <person name="Weber M."/>
            <person name="Breer H."/>
            <person name="Pelosi P."/>
        </authorList>
    </citation>
    <scope>NUCLEOTIDE SEQUENCE [GENOMIC DNA] OF 17-163</scope>
    <source>
        <tissue evidence="9">Nasal mucosa</tissue>
    </source>
</reference>
<reference evidence="5" key="6">
    <citation type="journal article" date="1995" name="Comp. Biochem. Physiol.">
        <title>Odorant-binding proteins of the mouse.</title>
        <authorList>
            <person name="Pes D."/>
            <person name="Pelosi P."/>
        </authorList>
    </citation>
    <scope>PROTEIN SEQUENCE OF 17-44</scope>
    <scope>FUNCTION</scope>
    <scope>TISSUE SPECIFICITY</scope>
    <scope>BLOCKAGE OF N-TERMINUS</scope>
</reference>
<reference key="7">
    <citation type="journal article" date="2010" name="Cell">
        <title>A tissue-specific atlas of mouse protein phosphorylation and expression.</title>
        <authorList>
            <person name="Huttlin E.L."/>
            <person name="Jedrychowski M.P."/>
            <person name="Elias J.E."/>
            <person name="Goswami T."/>
            <person name="Rad R."/>
            <person name="Beausoleil S.A."/>
            <person name="Villen J."/>
            <person name="Haas W."/>
            <person name="Sowa M.E."/>
            <person name="Gygi S.P."/>
        </authorList>
    </citation>
    <scope>IDENTIFICATION BY MASS SPECTROMETRY [LARGE SCALE ANALYSIS]</scope>
    <source>
        <tissue>Kidney</tissue>
    </source>
</reference>
<sequence length="163" mass="18469">MAKFLLLALTFGLAHAAMEGPWKTVAIAADRVDKIERGGELRIYCRSLTCEKECKEMKVTFYVNENGQCSLTTITGYLQEDGKTYKTQFQGNNRYKLVDESPENLTFYSENVDRADRKTKLLFILGHGPLTSEQKEKFAELAEEKGIPAGNIREVLITDYCPE</sequence>
<dbReference type="EMBL" id="AK017455">
    <property type="protein sequence ID" value="BAB30751.2"/>
    <property type="molecule type" value="mRNA"/>
</dbReference>
<dbReference type="EMBL" id="AL671961">
    <property type="status" value="NOT_ANNOTATED_CDS"/>
    <property type="molecule type" value="Genomic_DNA"/>
</dbReference>
<dbReference type="EMBL" id="CH466576">
    <property type="protein sequence ID" value="EDL29193.1"/>
    <property type="molecule type" value="Genomic_DNA"/>
</dbReference>
<dbReference type="EMBL" id="BC125514">
    <property type="protein sequence ID" value="AAI25515.1"/>
    <property type="molecule type" value="mRNA"/>
</dbReference>
<dbReference type="EMBL" id="BC125516">
    <property type="protein sequence ID" value="AAI25517.1"/>
    <property type="molecule type" value="mRNA"/>
</dbReference>
<dbReference type="EMBL" id="Y10971">
    <property type="protein sequence ID" value="CAA71867.1"/>
    <property type="molecule type" value="Genomic_DNA"/>
</dbReference>
<dbReference type="CCDS" id="CCDS30251.1"/>
<dbReference type="RefSeq" id="NP_032780.2">
    <property type="nucleotide sequence ID" value="NM_008754.2"/>
</dbReference>
<dbReference type="SMR" id="Q9D3H2"/>
<dbReference type="FunCoup" id="Q9D3H2">
    <property type="interactions" value="34"/>
</dbReference>
<dbReference type="STRING" id="10090.ENSMUSP00000085531"/>
<dbReference type="GlyGen" id="Q9D3H2">
    <property type="glycosylation" value="1 site, 1 N-linked glycan (1 site)"/>
</dbReference>
<dbReference type="iPTMnet" id="Q9D3H2"/>
<dbReference type="PhosphoSitePlus" id="Q9D3H2"/>
<dbReference type="PaxDb" id="10090-ENSMUSP00000085531"/>
<dbReference type="ProteomicsDB" id="294265"/>
<dbReference type="DNASU" id="18249"/>
<dbReference type="Ensembl" id="ENSMUST00000088201.2">
    <property type="protein sequence ID" value="ENSMUSP00000085531.2"/>
    <property type="gene ID" value="ENSMUSG00000067684.2"/>
</dbReference>
<dbReference type="GeneID" id="18249"/>
<dbReference type="KEGG" id="mmu:18249"/>
<dbReference type="UCSC" id="uc009tqu.1">
    <property type="organism name" value="mouse"/>
</dbReference>
<dbReference type="AGR" id="MGI:1277949"/>
<dbReference type="CTD" id="18249"/>
<dbReference type="MGI" id="MGI:1277949">
    <property type="gene designation" value="Obp1a"/>
</dbReference>
<dbReference type="VEuPathDB" id="HostDB:ENSMUSG00000067684"/>
<dbReference type="eggNOG" id="ENOG502TDZD">
    <property type="taxonomic scope" value="Eukaryota"/>
</dbReference>
<dbReference type="GeneTree" id="ENSGT01050000244868"/>
<dbReference type="HOGENOM" id="CLU_094061_4_2_1"/>
<dbReference type="InParanoid" id="Q9D3H2"/>
<dbReference type="OMA" id="PLRCYNR"/>
<dbReference type="OrthoDB" id="9630146at2759"/>
<dbReference type="PhylomeDB" id="Q9D3H2"/>
<dbReference type="TreeFam" id="TF338197"/>
<dbReference type="BioGRID-ORCS" id="18249">
    <property type="hits" value="5 hits in 74 CRISPR screens"/>
</dbReference>
<dbReference type="ChiTaRS" id="Obp1a">
    <property type="organism name" value="mouse"/>
</dbReference>
<dbReference type="PRO" id="PR:Q9D3H2"/>
<dbReference type="Proteomes" id="UP000000589">
    <property type="component" value="Chromosome X"/>
</dbReference>
<dbReference type="RNAct" id="Q9D3H2">
    <property type="molecule type" value="protein"/>
</dbReference>
<dbReference type="Bgee" id="ENSMUSG00000067684">
    <property type="expression patterns" value="Expressed in lacrimal gland and 15 other cell types or tissues"/>
</dbReference>
<dbReference type="GO" id="GO:0005576">
    <property type="term" value="C:extracellular region"/>
    <property type="evidence" value="ECO:0007669"/>
    <property type="project" value="UniProtKB-SubCell"/>
</dbReference>
<dbReference type="GO" id="GO:0005549">
    <property type="term" value="F:odorant binding"/>
    <property type="evidence" value="ECO:0000314"/>
    <property type="project" value="MGI"/>
</dbReference>
<dbReference type="GO" id="GO:0036094">
    <property type="term" value="F:small molecule binding"/>
    <property type="evidence" value="ECO:0007669"/>
    <property type="project" value="InterPro"/>
</dbReference>
<dbReference type="GO" id="GO:0007608">
    <property type="term" value="P:sensory perception of smell"/>
    <property type="evidence" value="ECO:0007669"/>
    <property type="project" value="UniProtKB-KW"/>
</dbReference>
<dbReference type="CDD" id="cd19427">
    <property type="entry name" value="lipocalin_OBP-like"/>
    <property type="match status" value="1"/>
</dbReference>
<dbReference type="Gene3D" id="2.40.128.20">
    <property type="match status" value="1"/>
</dbReference>
<dbReference type="InterPro" id="IPR012674">
    <property type="entry name" value="Calycin"/>
</dbReference>
<dbReference type="InterPro" id="IPR002345">
    <property type="entry name" value="Lipocalin"/>
</dbReference>
<dbReference type="InterPro" id="IPR000566">
    <property type="entry name" value="Lipocln_cytosolic_FA-bd_dom"/>
</dbReference>
<dbReference type="InterPro" id="IPR002448">
    <property type="entry name" value="OBP-like"/>
</dbReference>
<dbReference type="PANTHER" id="PTHR11430">
    <property type="entry name" value="LIPOCALIN"/>
    <property type="match status" value="1"/>
</dbReference>
<dbReference type="PANTHER" id="PTHR11430:SF65">
    <property type="entry name" value="ODORANT-BINDING PROTEIN 1A-RELATED"/>
    <property type="match status" value="1"/>
</dbReference>
<dbReference type="Pfam" id="PF00061">
    <property type="entry name" value="Lipocalin"/>
    <property type="match status" value="1"/>
</dbReference>
<dbReference type="PRINTS" id="PR01173">
    <property type="entry name" value="ODORANTBNDNG"/>
</dbReference>
<dbReference type="SUPFAM" id="SSF50814">
    <property type="entry name" value="Lipocalins"/>
    <property type="match status" value="1"/>
</dbReference>
<name>OBP1A_MOUSE</name>
<organism>
    <name type="scientific">Mus musculus</name>
    <name type="common">Mouse</name>
    <dbReference type="NCBI Taxonomy" id="10090"/>
    <lineage>
        <taxon>Eukaryota</taxon>
        <taxon>Metazoa</taxon>
        <taxon>Chordata</taxon>
        <taxon>Craniata</taxon>
        <taxon>Vertebrata</taxon>
        <taxon>Euteleostomi</taxon>
        <taxon>Mammalia</taxon>
        <taxon>Eutheria</taxon>
        <taxon>Euarchontoglires</taxon>
        <taxon>Glires</taxon>
        <taxon>Rodentia</taxon>
        <taxon>Myomorpha</taxon>
        <taxon>Muroidea</taxon>
        <taxon>Muridae</taxon>
        <taxon>Murinae</taxon>
        <taxon>Mus</taxon>
        <taxon>Mus</taxon>
    </lineage>
</organism>
<gene>
    <name evidence="4" type="primary">Obp1a</name>
</gene>
<comment type="function">
    <text evidence="2">Binds the chemical odorant 2-isobutyl-3-methoxypyrazine.</text>
</comment>
<comment type="subunit">
    <text evidence="6">May form a heterodimer with OBP1B.</text>
</comment>
<comment type="subcellular location">
    <subcellularLocation>
        <location evidence="5">Secreted</location>
    </subcellularLocation>
</comment>
<comment type="tissue specificity">
    <text evidence="2 3">Expressed in nasal mucosa (at protein level) (PubMed:8529023). Specifically detected in septal and lateral nasal glands (PubMed:9661663).</text>
</comment>
<comment type="PTM">
    <text evidence="2">The N-terminus may be blocked.</text>
</comment>
<comment type="similarity">
    <text evidence="5">Belongs to the calycin superfamily. Lipocalin family.</text>
</comment>
<protein>
    <recommendedName>
        <fullName evidence="5">Odorant-binding protein 1a</fullName>
    </recommendedName>
    <alternativeName>
        <fullName evidence="4">Odorant-binding protein IA</fullName>
    </alternativeName>
</protein>
<feature type="signal peptide" evidence="2">
    <location>
        <begin position="1"/>
        <end position="16"/>
    </location>
</feature>
<feature type="chain" id="PRO_5006751578" description="Odorant-binding protein 1a">
    <location>
        <begin position="17"/>
        <end position="163"/>
    </location>
</feature>
<feature type="disulfide bond" evidence="1">
    <location>
        <begin position="50"/>
        <end position="54"/>
    </location>
</feature>
<feature type="disulfide bond" evidence="1">
    <location>
        <begin position="69"/>
        <end position="161"/>
    </location>
</feature>
<proteinExistence type="evidence at protein level"/>